<gene>
    <name evidence="4 10 12" type="primary">IGLV11-55</name>
</gene>
<sequence>MALTPLLLLLLSHCTGSLSRPVLTQPPSLSASPGATARLPCTLSSDLSVGGKNMFWYQQKLGSSPRLFLYHYSDSDKQLGPGVPSRVSGSKETSSNTAFLLISGLQPEDEADYYCQVYESSAN</sequence>
<reference key="1">
    <citation type="journal article" date="1999" name="Nature">
        <title>The DNA sequence of human chromosome 22.</title>
        <authorList>
            <person name="Dunham I."/>
            <person name="Hunt A.R."/>
            <person name="Collins J.E."/>
            <person name="Bruskiewich R."/>
            <person name="Beare D.M."/>
            <person name="Clamp M."/>
            <person name="Smink L.J."/>
            <person name="Ainscough R."/>
            <person name="Almeida J.P."/>
            <person name="Babbage A.K."/>
            <person name="Bagguley C."/>
            <person name="Bailey J."/>
            <person name="Barlow K.F."/>
            <person name="Bates K.N."/>
            <person name="Beasley O.P."/>
            <person name="Bird C.P."/>
            <person name="Blakey S.E."/>
            <person name="Bridgeman A.M."/>
            <person name="Buck D."/>
            <person name="Burgess J."/>
            <person name="Burrill W.D."/>
            <person name="Burton J."/>
            <person name="Carder C."/>
            <person name="Carter N.P."/>
            <person name="Chen Y."/>
            <person name="Clark G."/>
            <person name="Clegg S.M."/>
            <person name="Cobley V.E."/>
            <person name="Cole C.G."/>
            <person name="Collier R.E."/>
            <person name="Connor R."/>
            <person name="Conroy D."/>
            <person name="Corby N.R."/>
            <person name="Coville G.J."/>
            <person name="Cox A.V."/>
            <person name="Davis J."/>
            <person name="Dawson E."/>
            <person name="Dhami P.D."/>
            <person name="Dockree C."/>
            <person name="Dodsworth S.J."/>
            <person name="Durbin R.M."/>
            <person name="Ellington A.G."/>
            <person name="Evans K.L."/>
            <person name="Fey J.M."/>
            <person name="Fleming K."/>
            <person name="French L."/>
            <person name="Garner A.A."/>
            <person name="Gilbert J.G.R."/>
            <person name="Goward M.E."/>
            <person name="Grafham D.V."/>
            <person name="Griffiths M.N.D."/>
            <person name="Hall C."/>
            <person name="Hall R.E."/>
            <person name="Hall-Tamlyn G."/>
            <person name="Heathcott R.W."/>
            <person name="Ho S."/>
            <person name="Holmes S."/>
            <person name="Hunt S.E."/>
            <person name="Jones M.C."/>
            <person name="Kershaw J."/>
            <person name="Kimberley A.M."/>
            <person name="King A."/>
            <person name="Laird G.K."/>
            <person name="Langford C.F."/>
            <person name="Leversha M.A."/>
            <person name="Lloyd C."/>
            <person name="Lloyd D.M."/>
            <person name="Martyn I.D."/>
            <person name="Mashreghi-Mohammadi M."/>
            <person name="Matthews L.H."/>
            <person name="Mccann O.T."/>
            <person name="Mcclay J."/>
            <person name="Mclaren S."/>
            <person name="McMurray A.A."/>
            <person name="Milne S.A."/>
            <person name="Mortimore B.J."/>
            <person name="Odell C.N."/>
            <person name="Pavitt R."/>
            <person name="Pearce A.V."/>
            <person name="Pearson D."/>
            <person name="Phillimore B.J.C.T."/>
            <person name="Phillips S.H."/>
            <person name="Plumb R.W."/>
            <person name="Ramsay H."/>
            <person name="Ramsey Y."/>
            <person name="Rogers L."/>
            <person name="Ross M.T."/>
            <person name="Scott C.E."/>
            <person name="Sehra H.K."/>
            <person name="Skuce C.D."/>
            <person name="Smalley S."/>
            <person name="Smith M.L."/>
            <person name="Soderlund C."/>
            <person name="Spragon L."/>
            <person name="Steward C.A."/>
            <person name="Sulston J.E."/>
            <person name="Swann R.M."/>
            <person name="Vaudin M."/>
            <person name="Wall M."/>
            <person name="Wallis J.M."/>
            <person name="Whiteley M.N."/>
            <person name="Willey D.L."/>
            <person name="Williams L."/>
            <person name="Williams S.A."/>
            <person name="Williamson H."/>
            <person name="Wilmer T.E."/>
            <person name="Wilming L."/>
            <person name="Wright C.L."/>
            <person name="Hubbard T."/>
            <person name="Bentley D.R."/>
            <person name="Beck S."/>
            <person name="Rogers J."/>
            <person name="Shimizu N."/>
            <person name="Minoshima S."/>
            <person name="Kawasaki K."/>
            <person name="Sasaki T."/>
            <person name="Asakawa S."/>
            <person name="Kudoh J."/>
            <person name="Shintani A."/>
            <person name="Shibuya K."/>
            <person name="Yoshizaki Y."/>
            <person name="Aoki N."/>
            <person name="Mitsuyama S."/>
            <person name="Roe B.A."/>
            <person name="Chen F."/>
            <person name="Chu L."/>
            <person name="Crabtree J."/>
            <person name="Deschamps S."/>
            <person name="Do A."/>
            <person name="Do T."/>
            <person name="Dorman A."/>
            <person name="Fang F."/>
            <person name="Fu Y."/>
            <person name="Hu P."/>
            <person name="Hua A."/>
            <person name="Kenton S."/>
            <person name="Lai H."/>
            <person name="Lao H.I."/>
            <person name="Lewis J."/>
            <person name="Lewis S."/>
            <person name="Lin S.-P."/>
            <person name="Loh P."/>
            <person name="Malaj E."/>
            <person name="Nguyen T."/>
            <person name="Pan H."/>
            <person name="Phan S."/>
            <person name="Qi S."/>
            <person name="Qian Y."/>
            <person name="Ray L."/>
            <person name="Ren Q."/>
            <person name="Shaull S."/>
            <person name="Sloan D."/>
            <person name="Song L."/>
            <person name="Wang Q."/>
            <person name="Wang Y."/>
            <person name="Wang Z."/>
            <person name="White J."/>
            <person name="Willingham D."/>
            <person name="Wu H."/>
            <person name="Yao Z."/>
            <person name="Zhan M."/>
            <person name="Zhang G."/>
            <person name="Chissoe S."/>
            <person name="Murray J."/>
            <person name="Miller N."/>
            <person name="Minx P."/>
            <person name="Fulton R."/>
            <person name="Johnson D."/>
            <person name="Bemis G."/>
            <person name="Bentley D."/>
            <person name="Bradshaw H."/>
            <person name="Bourne S."/>
            <person name="Cordes M."/>
            <person name="Du Z."/>
            <person name="Fulton L."/>
            <person name="Goela D."/>
            <person name="Graves T."/>
            <person name="Hawkins J."/>
            <person name="Hinds K."/>
            <person name="Kemp K."/>
            <person name="Latreille P."/>
            <person name="Layman D."/>
            <person name="Ozersky P."/>
            <person name="Rohlfing T."/>
            <person name="Scheet P."/>
            <person name="Walker C."/>
            <person name="Wamsley A."/>
            <person name="Wohldmann P."/>
            <person name="Pepin K."/>
            <person name="Nelson J."/>
            <person name="Korf I."/>
            <person name="Bedell J.A."/>
            <person name="Hillier L.W."/>
            <person name="Mardis E."/>
            <person name="Waterston R."/>
            <person name="Wilson R."/>
            <person name="Emanuel B.S."/>
            <person name="Shaikh T."/>
            <person name="Kurahashi H."/>
            <person name="Saitta S."/>
            <person name="Budarf M.L."/>
            <person name="McDermid H.E."/>
            <person name="Johnson A."/>
            <person name="Wong A.C.C."/>
            <person name="Morrow B.E."/>
            <person name="Edelmann L."/>
            <person name="Kim U.J."/>
            <person name="Shizuya H."/>
            <person name="Simon M.I."/>
            <person name="Dumanski J.P."/>
            <person name="Peyrard M."/>
            <person name="Kedra D."/>
            <person name="Seroussi E."/>
            <person name="Fransson I."/>
            <person name="Tapia I."/>
            <person name="Bruder C.E."/>
            <person name="O'Brien K.P."/>
            <person name="Wilkinson P."/>
            <person name="Bodenteich A."/>
            <person name="Hartman K."/>
            <person name="Hu X."/>
            <person name="Khan A.S."/>
            <person name="Lane L."/>
            <person name="Tilahun Y."/>
            <person name="Wright H."/>
        </authorList>
    </citation>
    <scope>NUCLEOTIDE SEQUENCE [LARGE SCALE GENOMIC DNA] (IMGT ALLELE IGLV11-55*02)</scope>
</reference>
<reference key="2">
    <citation type="journal article" date="1998" name="Exp. Clin. Immunogenet.">
        <title>IMGT (ImMunoGeneTics) locus on focus. A new section of Experimental and Clinical Immunogenetics.</title>
        <authorList>
            <person name="Lefranc M.P."/>
        </authorList>
    </citation>
    <scope>CHARACTERIZATION</scope>
</reference>
<reference key="3">
    <citation type="journal article" date="2001" name="Exp. Clin. Immunogenet.">
        <title>Nomenclature of the human immunoglobulin heavy (IGH) genes.</title>
        <authorList>
            <person name="Lefranc M.P."/>
        </authorList>
    </citation>
    <scope>NOMENCLATURE</scope>
</reference>
<reference key="4">
    <citation type="book" date="2001" name="The Immunoglobulin FactsBook.">
        <title>The Immunoglobulin FactsBook.</title>
        <editorList>
            <person name="Lefranc M.P."/>
            <person name="Lefranc G."/>
        </editorList>
        <authorList>
            <person name="Lefranc M.P."/>
            <person name="Lefranc G."/>
        </authorList>
    </citation>
    <scope>NOMENCLATURE</scope>
</reference>
<reference key="5">
    <citation type="journal article" date="2007" name="Annu. Rev. Genet.">
        <title>Immunoglobulin somatic hypermutation.</title>
        <authorList>
            <person name="Teng G."/>
            <person name="Papavasiliou F.N."/>
        </authorList>
    </citation>
    <scope>REVIEW ON SOMATIC HYPERMUTATION</scope>
</reference>
<reference key="6">
    <citation type="journal article" date="2010" name="J. Allergy Clin. Immunol.">
        <title>Structure and function of immunoglobulins.</title>
        <authorList>
            <person name="Schroeder H.W. Jr."/>
            <person name="Cavacini L."/>
        </authorList>
    </citation>
    <scope>REVIEW ON IMMUNOGLOBULINS</scope>
</reference>
<reference key="7">
    <citation type="journal article" date="2012" name="Nat. Rev. Immunol.">
        <title>Molecular programming of B cell memory.</title>
        <authorList>
            <person name="McHeyzer-Williams M."/>
            <person name="Okitsu S."/>
            <person name="Wang N."/>
            <person name="McHeyzer-Williams L."/>
        </authorList>
    </citation>
    <scope>REVIEW ON FUNCTION</scope>
</reference>
<reference key="8">
    <citation type="journal article" date="2014" name="Front. Immunol.">
        <title>Immunoglobulin and T Cell Receptor Genes: IMGT((R)) and the Birth and Rise of Immunoinformatics.</title>
        <authorList>
            <person name="Lefranc M.P."/>
        </authorList>
    </citation>
    <scope>NOMENCLATURE</scope>
</reference>
<comment type="function">
    <text evidence="5 6 7 8 9">Probable non-functional open reading frame (ORF) of V region of the variable domain of immunoglobulin light chains (PubMed:24600447). Non-functional ORF generally cannot participate in the synthesis of a productive immunoglobulin chain due to altered V-(D)-J or switch recombination and/or splicing site (at mRNA level) and/or conserved amino acid change (protein level) (PubMed:9619395). Immunoglobulins, also known as antibodies, are membrane-bound or secreted glycoproteins produced by B lymphocytes. In the recognition phase of humoral immunity, the membrane-bound immunoglobulins serve as receptors which, upon binding of a specific antigen, trigger the clonal expansion and differentiation of B lymphocytes into immunoglobulins-secreting plasma cells. Secreted immunoglobulins mediate the effector phase of humoral immunity, which results in the elimination of bound antigens (PubMed:20176268, PubMed:22158414). The antigen binding site is formed by the variable domain of one heavy chain, together with that of its associated light chain. Thus, each immunoglobulin has two antigen binding sites with remarkable affinity for a particular antigen. The variable domains are assembled by a process called V-(D)-J rearrangement and can then be subjected to somatic hypermutations which, after exposure to antigen and selection, allow affinity maturation for a particular antigen (PubMed:17576170, PubMed:20176268).</text>
</comment>
<comment type="subunit">
    <text evidence="6">Immunoglobulins are composed of two identical heavy chains and two identical light chains; disulfide-linked.</text>
</comment>
<comment type="subcellular location">
    <subcellularLocation>
        <location evidence="6 7">Secreted</location>
    </subcellularLocation>
    <subcellularLocation>
        <location evidence="6 7">Cell membrane</location>
    </subcellularLocation>
</comment>
<comment type="polymorphism">
    <text evidence="11">There are several alleles. The sequence shown is that of IMGT allele IGLV11-55*02.</text>
</comment>
<comment type="caution">
    <text evidence="9 11">Most probably a non-functional protein that cannot participate in the synthesis of a productive immunoglobulin chain due to an unusual recombination signal (RS) sequence altering V-(D)-J recombination (PubMed:9619395).</text>
</comment>
<organism>
    <name type="scientific">Homo sapiens</name>
    <name type="common">Human</name>
    <dbReference type="NCBI Taxonomy" id="9606"/>
    <lineage>
        <taxon>Eukaryota</taxon>
        <taxon>Metazoa</taxon>
        <taxon>Chordata</taxon>
        <taxon>Craniata</taxon>
        <taxon>Vertebrata</taxon>
        <taxon>Euteleostomi</taxon>
        <taxon>Mammalia</taxon>
        <taxon>Eutheria</taxon>
        <taxon>Euarchontoglires</taxon>
        <taxon>Primates</taxon>
        <taxon>Haplorrhini</taxon>
        <taxon>Catarrhini</taxon>
        <taxon>Hominidae</taxon>
        <taxon>Homo</taxon>
    </lineage>
</organism>
<proteinExistence type="evidence at protein level"/>
<protein>
    <recommendedName>
        <fullName evidence="11">Probable non-functional immunoglobulin lambda variable 11-55</fullName>
    </recommendedName>
</protein>
<keyword id="KW-1064">Adaptive immunity</keyword>
<keyword id="KW-1003">Cell membrane</keyword>
<keyword id="KW-1015">Disulfide bond</keyword>
<keyword id="KW-0391">Immunity</keyword>
<keyword id="KW-1280">Immunoglobulin</keyword>
<keyword id="KW-0393">Immunoglobulin domain</keyword>
<keyword id="KW-0472">Membrane</keyword>
<keyword id="KW-1185">Reference proteome</keyword>
<keyword id="KW-0964">Secreted</keyword>
<keyword id="KW-0732">Signal</keyword>
<name>LVK55_HUMAN</name>
<accession>A0A075B6I3</accession>
<dbReference type="EMBL" id="AC245060">
    <property type="status" value="NOT_ANNOTATED_CDS"/>
    <property type="molecule type" value="Genomic_DNA"/>
</dbReference>
<dbReference type="SMR" id="A0A075B6I3"/>
<dbReference type="FunCoup" id="A0A075B6I3">
    <property type="interactions" value="256"/>
</dbReference>
<dbReference type="BioMuta" id="IGLV11-55"/>
<dbReference type="MassIVE" id="A0A075B6I3"/>
<dbReference type="Ensembl" id="ENST00000390286.3">
    <property type="protein sequence ID" value="ENSP00000374821.3"/>
    <property type="gene ID" value="ENSG00000211641.3"/>
</dbReference>
<dbReference type="UCSC" id="uc062cbf.1">
    <property type="organism name" value="human"/>
</dbReference>
<dbReference type="AGR" id="HGNC:5886"/>
<dbReference type="GeneCards" id="IGLV11-55"/>
<dbReference type="HGNC" id="HGNC:5886">
    <property type="gene designation" value="IGLV11-55"/>
</dbReference>
<dbReference type="HPA" id="ENSG00000211641">
    <property type="expression patterns" value="Tissue enhanced (lymphoid)"/>
</dbReference>
<dbReference type="neXtProt" id="NX_A0A075B6I3"/>
<dbReference type="VEuPathDB" id="HostDB:ENSG00000211641"/>
<dbReference type="GeneTree" id="ENSGT00940000161517"/>
<dbReference type="HOGENOM" id="CLU_077975_4_0_1"/>
<dbReference type="InParanoid" id="A0A075B6I3"/>
<dbReference type="OMA" id="GGKNMYW"/>
<dbReference type="OrthoDB" id="9537349at2759"/>
<dbReference type="PAN-GO" id="A0A075B6I3">
    <property type="GO annotations" value="3 GO annotations based on evolutionary models"/>
</dbReference>
<dbReference type="SignaLink" id="A0A075B6I3"/>
<dbReference type="PRO" id="PR:A0A075B6I3"/>
<dbReference type="Proteomes" id="UP000005640">
    <property type="component" value="Chromosome 22"/>
</dbReference>
<dbReference type="RNAct" id="A0A075B6I3">
    <property type="molecule type" value="protein"/>
</dbReference>
<dbReference type="Bgee" id="ENSG00000211641">
    <property type="expression patterns" value="Expressed in duodenum and 41 other cell types or tissues"/>
</dbReference>
<dbReference type="GO" id="GO:0005576">
    <property type="term" value="C:extracellular region"/>
    <property type="evidence" value="ECO:0007669"/>
    <property type="project" value="UniProtKB-SubCell"/>
</dbReference>
<dbReference type="GO" id="GO:0019814">
    <property type="term" value="C:immunoglobulin complex"/>
    <property type="evidence" value="ECO:0000318"/>
    <property type="project" value="GO_Central"/>
</dbReference>
<dbReference type="GO" id="GO:0005886">
    <property type="term" value="C:plasma membrane"/>
    <property type="evidence" value="ECO:0007669"/>
    <property type="project" value="UniProtKB-SubCell"/>
</dbReference>
<dbReference type="GO" id="GO:0002250">
    <property type="term" value="P:adaptive immune response"/>
    <property type="evidence" value="ECO:0007669"/>
    <property type="project" value="UniProtKB-KW"/>
</dbReference>
<dbReference type="GO" id="GO:0006955">
    <property type="term" value="P:immune response"/>
    <property type="evidence" value="ECO:0000318"/>
    <property type="project" value="GO_Central"/>
</dbReference>
<dbReference type="FunFam" id="2.60.40.10:FF:000721">
    <property type="entry name" value="Immunoglobulin lambda variable 5-45"/>
    <property type="match status" value="1"/>
</dbReference>
<dbReference type="Gene3D" id="2.60.40.10">
    <property type="entry name" value="Immunoglobulins"/>
    <property type="match status" value="1"/>
</dbReference>
<dbReference type="InterPro" id="IPR007110">
    <property type="entry name" value="Ig-like_dom"/>
</dbReference>
<dbReference type="InterPro" id="IPR036179">
    <property type="entry name" value="Ig-like_dom_sf"/>
</dbReference>
<dbReference type="InterPro" id="IPR013783">
    <property type="entry name" value="Ig-like_fold"/>
</dbReference>
<dbReference type="InterPro" id="IPR003599">
    <property type="entry name" value="Ig_sub"/>
</dbReference>
<dbReference type="InterPro" id="IPR013106">
    <property type="entry name" value="Ig_V-set"/>
</dbReference>
<dbReference type="InterPro" id="IPR050150">
    <property type="entry name" value="IgV_Light_Chain"/>
</dbReference>
<dbReference type="PANTHER" id="PTHR23267">
    <property type="entry name" value="IMMUNOGLOBULIN LIGHT CHAIN"/>
    <property type="match status" value="1"/>
</dbReference>
<dbReference type="Pfam" id="PF07686">
    <property type="entry name" value="V-set"/>
    <property type="match status" value="1"/>
</dbReference>
<dbReference type="SMART" id="SM00409">
    <property type="entry name" value="IG"/>
    <property type="match status" value="1"/>
</dbReference>
<dbReference type="SMART" id="SM00406">
    <property type="entry name" value="IGv"/>
    <property type="match status" value="1"/>
</dbReference>
<dbReference type="SUPFAM" id="SSF48726">
    <property type="entry name" value="Immunoglobulin"/>
    <property type="match status" value="1"/>
</dbReference>
<dbReference type="PROSITE" id="PS50835">
    <property type="entry name" value="IG_LIKE"/>
    <property type="match status" value="1"/>
</dbReference>
<evidence type="ECO:0000250" key="1">
    <source>
        <dbReference type="UniProtKB" id="P01721"/>
    </source>
</evidence>
<evidence type="ECO:0000255" key="2"/>
<evidence type="ECO:0000255" key="3">
    <source>
        <dbReference type="PROSITE-ProRule" id="PRU00114"/>
    </source>
</evidence>
<evidence type="ECO:0000303" key="4">
    <source>
    </source>
</evidence>
<evidence type="ECO:0000303" key="5">
    <source>
    </source>
</evidence>
<evidence type="ECO:0000303" key="6">
    <source>
    </source>
</evidence>
<evidence type="ECO:0000303" key="7">
    <source>
    </source>
</evidence>
<evidence type="ECO:0000303" key="8">
    <source>
    </source>
</evidence>
<evidence type="ECO:0000303" key="9">
    <source>
    </source>
</evidence>
<evidence type="ECO:0000303" key="10">
    <source ref="4"/>
</evidence>
<evidence type="ECO:0000305" key="11"/>
<evidence type="ECO:0000312" key="12">
    <source>
        <dbReference type="HGNC" id="HGNC:5886"/>
    </source>
</evidence>
<feature type="signal peptide" evidence="2">
    <location>
        <begin position="1"/>
        <end position="19"/>
    </location>
</feature>
<feature type="chain" id="PRO_5012090809" description="Probable non-functional immunoglobulin lambda variable 11-55" evidence="2">
    <location>
        <begin position="20"/>
        <end position="123"/>
    </location>
</feature>
<feature type="domain" description="Ig-like" evidence="3">
    <location>
        <begin position="21"/>
        <end position="123" status="greater than"/>
    </location>
</feature>
<feature type="region of interest" description="Framework-1" evidence="1">
    <location>
        <begin position="20"/>
        <end position="44"/>
    </location>
</feature>
<feature type="region of interest" description="Complementarity-determining-1" evidence="1">
    <location>
        <begin position="45"/>
        <end position="53"/>
    </location>
</feature>
<feature type="region of interest" description="Framework-2" evidence="1">
    <location>
        <begin position="54"/>
        <end position="70"/>
    </location>
</feature>
<feature type="region of interest" description="Complementarity-determining-2" evidence="1">
    <location>
        <begin position="71"/>
        <end position="77"/>
    </location>
</feature>
<feature type="region of interest" description="Framework-3" evidence="1">
    <location>
        <begin position="78"/>
        <end position="115"/>
    </location>
</feature>
<feature type="region of interest" description="Complementarity-determining-3" evidence="1">
    <location>
        <begin position="116"/>
        <end position="123" status="greater than"/>
    </location>
</feature>
<feature type="disulfide bond" evidence="3">
    <location>
        <begin position="41"/>
        <end position="115"/>
    </location>
</feature>
<feature type="non-terminal residue">
    <location>
        <position position="123"/>
    </location>
</feature>